<accession>P02166</accession>
<evidence type="ECO:0000250" key="1">
    <source>
        <dbReference type="UniProtKB" id="P02144"/>
    </source>
</evidence>
<evidence type="ECO:0000250" key="2">
    <source>
        <dbReference type="UniProtKB" id="P02185"/>
    </source>
</evidence>
<evidence type="ECO:0000250" key="3">
    <source>
        <dbReference type="UniProtKB" id="P02189"/>
    </source>
</evidence>
<evidence type="ECO:0000250" key="4">
    <source>
        <dbReference type="UniProtKB" id="P04247"/>
    </source>
</evidence>
<evidence type="ECO:0000250" key="5">
    <source>
        <dbReference type="UniProtKB" id="P68082"/>
    </source>
</evidence>
<evidence type="ECO:0000250" key="6">
    <source>
        <dbReference type="UniProtKB" id="Q9QZ76"/>
    </source>
</evidence>
<evidence type="ECO:0000255" key="7">
    <source>
        <dbReference type="PROSITE-ProRule" id="PRU00238"/>
    </source>
</evidence>
<evidence type="ECO:0000269" key="8">
    <source>
    </source>
</evidence>
<keyword id="KW-0963">Cytoplasm</keyword>
<keyword id="KW-0903">Direct protein sequencing</keyword>
<keyword id="KW-0349">Heme</keyword>
<keyword id="KW-0408">Iron</keyword>
<keyword id="KW-0479">Metal-binding</keyword>
<keyword id="KW-0514">Muscle protein</keyword>
<keyword id="KW-0560">Oxidoreductase</keyword>
<keyword id="KW-0561">Oxygen transport</keyword>
<keyword id="KW-0597">Phosphoprotein</keyword>
<keyword id="KW-0813">Transport</keyword>
<comment type="function">
    <text evidence="1">Monomeric heme protein which primary function is to store oxygen and facilitate its diffusion within muscle tissues. Reversibly binds oxygen through a pentacoordinated heme iron and enables its timely and efficient release as needed during periods of heightened demand. Depending on the oxidative conditions of tissues and cells, and in addition to its ability to bind oxygen, it also has a nitrite reductase activity whereby it regulates the production of bioactive nitric oxide. Under stress conditions, like hypoxia and anoxia, it also protects cells against reactive oxygen species thanks to its pseudoperoxidase activity.</text>
</comment>
<comment type="catalytic activity">
    <reaction evidence="1">
        <text>Fe(III)-heme b-[protein] + nitric oxide + H2O = Fe(II)-heme b-[protein] + nitrite + 2 H(+)</text>
        <dbReference type="Rhea" id="RHEA:77711"/>
        <dbReference type="Rhea" id="RHEA-COMP:18975"/>
        <dbReference type="Rhea" id="RHEA-COMP:18976"/>
        <dbReference type="ChEBI" id="CHEBI:15377"/>
        <dbReference type="ChEBI" id="CHEBI:15378"/>
        <dbReference type="ChEBI" id="CHEBI:16301"/>
        <dbReference type="ChEBI" id="CHEBI:16480"/>
        <dbReference type="ChEBI" id="CHEBI:55376"/>
        <dbReference type="ChEBI" id="CHEBI:60344"/>
    </reaction>
    <physiologicalReaction direction="right-to-left" evidence="1">
        <dbReference type="Rhea" id="RHEA:77713"/>
    </physiologicalReaction>
</comment>
<comment type="catalytic activity">
    <reaction evidence="1">
        <text>H2O2 + AH2 = A + 2 H2O</text>
        <dbReference type="Rhea" id="RHEA:30275"/>
        <dbReference type="ChEBI" id="CHEBI:13193"/>
        <dbReference type="ChEBI" id="CHEBI:15377"/>
        <dbReference type="ChEBI" id="CHEBI:16240"/>
        <dbReference type="ChEBI" id="CHEBI:17499"/>
    </reaction>
</comment>
<comment type="subunit">
    <text evidence="2">Monomeric.</text>
</comment>
<comment type="subcellular location">
    <subcellularLocation>
        <location evidence="1">Cytoplasm</location>
        <location evidence="1">Sarcoplasm</location>
    </subcellularLocation>
</comment>
<comment type="similarity">
    <text evidence="7">Belongs to the globin family.</text>
</comment>
<organism>
    <name type="scientific">Perodicticus potto edwarsi</name>
    <name type="common">Potto</name>
    <dbReference type="NCBI Taxonomy" id="9473"/>
    <lineage>
        <taxon>Eukaryota</taxon>
        <taxon>Metazoa</taxon>
        <taxon>Chordata</taxon>
        <taxon>Craniata</taxon>
        <taxon>Vertebrata</taxon>
        <taxon>Euteleostomi</taxon>
        <taxon>Mammalia</taxon>
        <taxon>Eutheria</taxon>
        <taxon>Euarchontoglires</taxon>
        <taxon>Primates</taxon>
        <taxon>Strepsirrhini</taxon>
        <taxon>Lorisiformes</taxon>
        <taxon>Lorisidae</taxon>
        <taxon>Perodicticus</taxon>
    </lineage>
</organism>
<reference key="1">
    <citation type="journal article" date="1975" name="Biochim. Biophys. Acta">
        <title>The myoglobin of primates. VII. Perodicticus potto edwarsi (potto).</title>
        <authorList>
            <person name="Romero-Herrera A.E."/>
            <person name="Lehmann H."/>
        </authorList>
    </citation>
    <scope>PROTEIN SEQUENCE OF 2-154</scope>
    <source>
        <tissue>Skeletal muscle</tissue>
    </source>
</reference>
<feature type="initiator methionine" description="Removed" evidence="8">
    <location>
        <position position="1"/>
    </location>
</feature>
<feature type="chain" id="PRO_0000053330" description="Myoglobin">
    <location>
        <begin position="2"/>
        <end position="154"/>
    </location>
</feature>
<feature type="domain" description="Globin" evidence="7">
    <location>
        <begin position="2"/>
        <end position="148"/>
    </location>
</feature>
<feature type="binding site" evidence="5">
    <location>
        <position position="65"/>
    </location>
    <ligand>
        <name>nitrite</name>
        <dbReference type="ChEBI" id="CHEBI:16301"/>
    </ligand>
</feature>
<feature type="binding site" evidence="3 7">
    <location>
        <position position="65"/>
    </location>
    <ligand>
        <name>O2</name>
        <dbReference type="ChEBI" id="CHEBI:15379"/>
    </ligand>
</feature>
<feature type="binding site" description="proximal binding residue" evidence="1">
    <location>
        <position position="94"/>
    </location>
    <ligand>
        <name>heme b</name>
        <dbReference type="ChEBI" id="CHEBI:60344"/>
    </ligand>
    <ligandPart>
        <name>Fe</name>
        <dbReference type="ChEBI" id="CHEBI:18248"/>
    </ligandPart>
</feature>
<feature type="modified residue" description="Phosphoserine" evidence="6">
    <location>
        <position position="4"/>
    </location>
</feature>
<feature type="modified residue" description="Phosphothreonine" evidence="4">
    <location>
        <position position="68"/>
    </location>
</feature>
<name>MYG_PERPO</name>
<sequence length="154" mass="17063">MGLSDGEWQSVLNVWGKVEADLAGHGQEILIRLFTAHPETLEKFDKFKNLKTPDEMKASEDLKKHGVTVLTALGGILKKKGHHEAEIKPLAQSHATKHKIPVKYLEFISEAIIHVLQSKHPGDFGADAQGAMNKALELFRNDIAAKYKELGFQG</sequence>
<dbReference type="EC" id="1.7.-.-" evidence="1"/>
<dbReference type="EC" id="1.11.1.-" evidence="1"/>
<dbReference type="PIR" id="A02488">
    <property type="entry name" value="MYLP"/>
</dbReference>
<dbReference type="SMR" id="P02166"/>
<dbReference type="GO" id="GO:0070062">
    <property type="term" value="C:extracellular exosome"/>
    <property type="evidence" value="ECO:0007669"/>
    <property type="project" value="TreeGrafter"/>
</dbReference>
<dbReference type="GO" id="GO:0016528">
    <property type="term" value="C:sarcoplasm"/>
    <property type="evidence" value="ECO:0000250"/>
    <property type="project" value="UniProtKB"/>
</dbReference>
<dbReference type="GO" id="GO:0020037">
    <property type="term" value="F:heme binding"/>
    <property type="evidence" value="ECO:0007669"/>
    <property type="project" value="InterPro"/>
</dbReference>
<dbReference type="GO" id="GO:0046872">
    <property type="term" value="F:metal ion binding"/>
    <property type="evidence" value="ECO:0007669"/>
    <property type="project" value="UniProtKB-KW"/>
</dbReference>
<dbReference type="GO" id="GO:0098809">
    <property type="term" value="F:nitrite reductase activity"/>
    <property type="evidence" value="ECO:0000250"/>
    <property type="project" value="UniProtKB"/>
</dbReference>
<dbReference type="GO" id="GO:0019825">
    <property type="term" value="F:oxygen binding"/>
    <property type="evidence" value="ECO:0007669"/>
    <property type="project" value="InterPro"/>
</dbReference>
<dbReference type="GO" id="GO:0005344">
    <property type="term" value="F:oxygen carrier activity"/>
    <property type="evidence" value="ECO:0000250"/>
    <property type="project" value="UniProtKB"/>
</dbReference>
<dbReference type="GO" id="GO:0004601">
    <property type="term" value="F:peroxidase activity"/>
    <property type="evidence" value="ECO:0000250"/>
    <property type="project" value="UniProtKB"/>
</dbReference>
<dbReference type="GO" id="GO:0019430">
    <property type="term" value="P:removal of superoxide radicals"/>
    <property type="evidence" value="ECO:0000250"/>
    <property type="project" value="UniProtKB"/>
</dbReference>
<dbReference type="CDD" id="cd08926">
    <property type="entry name" value="Mb"/>
    <property type="match status" value="1"/>
</dbReference>
<dbReference type="Gene3D" id="6.10.140.2100">
    <property type="match status" value="1"/>
</dbReference>
<dbReference type="Gene3D" id="6.10.140.2110">
    <property type="match status" value="1"/>
</dbReference>
<dbReference type="InterPro" id="IPR000971">
    <property type="entry name" value="Globin"/>
</dbReference>
<dbReference type="InterPro" id="IPR009050">
    <property type="entry name" value="Globin-like_sf"/>
</dbReference>
<dbReference type="InterPro" id="IPR002335">
    <property type="entry name" value="Myoglobin"/>
</dbReference>
<dbReference type="PANTHER" id="PTHR47132">
    <property type="entry name" value="MYOGLOBIN"/>
    <property type="match status" value="1"/>
</dbReference>
<dbReference type="PANTHER" id="PTHR47132:SF1">
    <property type="entry name" value="MYOGLOBIN"/>
    <property type="match status" value="1"/>
</dbReference>
<dbReference type="Pfam" id="PF00042">
    <property type="entry name" value="Globin"/>
    <property type="match status" value="1"/>
</dbReference>
<dbReference type="PRINTS" id="PR00613">
    <property type="entry name" value="MYOGLOBIN"/>
</dbReference>
<dbReference type="SUPFAM" id="SSF46458">
    <property type="entry name" value="Globin-like"/>
    <property type="match status" value="1"/>
</dbReference>
<dbReference type="PROSITE" id="PS01033">
    <property type="entry name" value="GLOBIN"/>
    <property type="match status" value="1"/>
</dbReference>
<gene>
    <name type="primary">MB</name>
</gene>
<protein>
    <recommendedName>
        <fullName>Myoglobin</fullName>
    </recommendedName>
    <alternativeName>
        <fullName evidence="1">Nitrite reductase MB</fullName>
        <ecNumber evidence="1">1.7.-.-</ecNumber>
    </alternativeName>
    <alternativeName>
        <fullName evidence="1">Pseudoperoxidase MB</fullName>
        <ecNumber evidence="1">1.11.1.-</ecNumber>
    </alternativeName>
</protein>
<proteinExistence type="evidence at protein level"/>